<keyword id="KW-0067">ATP-binding</keyword>
<keyword id="KW-0963">Cytoplasm</keyword>
<keyword id="KW-0227">DNA damage</keyword>
<keyword id="KW-0228">DNA excision</keyword>
<keyword id="KW-0234">DNA repair</keyword>
<keyword id="KW-0238">DNA-binding</keyword>
<keyword id="KW-0267">Excision nuclease</keyword>
<keyword id="KW-0479">Metal-binding</keyword>
<keyword id="KW-0547">Nucleotide-binding</keyword>
<keyword id="KW-1185">Reference proteome</keyword>
<keyword id="KW-0677">Repeat</keyword>
<keyword id="KW-0742">SOS response</keyword>
<keyword id="KW-0862">Zinc</keyword>
<keyword id="KW-0863">Zinc-finger</keyword>
<sequence>MKSIDIRGARTHNLKNINLILPRDKLIVITGLSGSGKSSLAFDTLYAEGQRRYVESLSAYARQFLSLMEKPDVDHIEGLSPAISIEQKSTSHNPRSTVGTITEIHDYLRLLFARVGEPRCPKHDLPLVAQTISQMVDRVMQEPEGKRLMLLAPVVRNRKGEHVKLLENLTASGYIRARINGEICDLSDPPVLELQKKHTIEVVVDRFKVRSDMMSRLAESFETALELSGSTAIIADMDDPGAPEMVFSASFACSECGYSLPELEPRLFSFNNPAGACPTCDGLGVEQYFDPAKVVQNPDVSLASGAIKGWDRRSLYYFSLLTAVASYYAFDIDTPFAQLPAKIQQIILYGSSDEIEFFYINDRDDKIQRKHTFEGVLNNMARRYKETESNAVRDELAKYINNRACLACQGSRLRQEARNVFIEQANLPEIAEKSIGEALTFFEQLELNGQRAQIAEKILKEIRERLQFLVNVGLNYLSLSRSAETLSGGEAQRIRLASQIGAGLVGVMYVLDEPSIGLHQRDNERLLNTLIHLRDLGNTVIVVEHDEDAIRAADHIVDIGPGAGVHGGQVIAQGSATEIMQIEASITGQYLAGKQKIEIPTERIPYDANKLLILSGASGNNLKHVELVIPVGLFTCITGVSGSGKSTLINDTLFPLAQNALNRAERTDVAPYQAIDGLAHFDKVIDIDQSPIGRTPRSNPATYTGLFTPIRELFAGTQEARARGYNVGRFSFNVRGGRCEACQGDGVIKVEMHFLPDVYVPCDHCKGKRYNRETLEVRYKGKTIHQVLEMTVEEAREFFDAIPAIARKLQTLIDVGLSYIRLGQSSTTLSGGEAQRVKLATELSKRDTGKTLYILDEPTTGLHFADIKQLLAVLHKLRDQGNTIVVIEHNLDVIKTADWIVDLGPEGGAGGGQIIAQGTPEDVAQQPGSHTARFLTQILAKG</sequence>
<feature type="chain" id="PRO_0000093052" description="UvrABC system protein A">
    <location>
        <begin position="1"/>
        <end position="942"/>
    </location>
</feature>
<feature type="domain" description="ABC transporter 1" evidence="1">
    <location>
        <begin position="310"/>
        <end position="586"/>
    </location>
</feature>
<feature type="domain" description="ABC transporter 2" evidence="1">
    <location>
        <begin position="606"/>
        <end position="936"/>
    </location>
</feature>
<feature type="zinc finger region" description="C4-type" evidence="1">
    <location>
        <begin position="253"/>
        <end position="280"/>
    </location>
</feature>
<feature type="zinc finger region" description="C4-type" evidence="1">
    <location>
        <begin position="739"/>
        <end position="765"/>
    </location>
</feature>
<feature type="binding site" evidence="1">
    <location>
        <begin position="31"/>
        <end position="38"/>
    </location>
    <ligand>
        <name>ATP</name>
        <dbReference type="ChEBI" id="CHEBI:30616"/>
    </ligand>
</feature>
<feature type="binding site" evidence="1">
    <location>
        <begin position="639"/>
        <end position="646"/>
    </location>
    <ligand>
        <name>ATP</name>
        <dbReference type="ChEBI" id="CHEBI:30616"/>
    </ligand>
</feature>
<accession>Q7VLW2</accession>
<comment type="function">
    <text evidence="1">The UvrABC repair system catalyzes the recognition and processing of DNA lesions. UvrA is an ATPase and a DNA-binding protein. A damage recognition complex composed of 2 UvrA and 2 UvrB subunits scans DNA for abnormalities. When the presence of a lesion has been verified by UvrB, the UvrA molecules dissociate.</text>
</comment>
<comment type="subunit">
    <text evidence="1">Forms a heterotetramer with UvrB during the search for lesions.</text>
</comment>
<comment type="subcellular location">
    <subcellularLocation>
        <location evidence="1">Cytoplasm</location>
    </subcellularLocation>
</comment>
<comment type="similarity">
    <text evidence="1">Belongs to the ABC transporter superfamily. UvrA family.</text>
</comment>
<protein>
    <recommendedName>
        <fullName evidence="1">UvrABC system protein A</fullName>
        <shortName evidence="1">UvrA protein</shortName>
    </recommendedName>
    <alternativeName>
        <fullName evidence="1">Excinuclease ABC subunit A</fullName>
    </alternativeName>
</protein>
<organism>
    <name type="scientific">Haemophilus ducreyi (strain 35000HP / ATCC 700724)</name>
    <dbReference type="NCBI Taxonomy" id="233412"/>
    <lineage>
        <taxon>Bacteria</taxon>
        <taxon>Pseudomonadati</taxon>
        <taxon>Pseudomonadota</taxon>
        <taxon>Gammaproteobacteria</taxon>
        <taxon>Pasteurellales</taxon>
        <taxon>Pasteurellaceae</taxon>
        <taxon>Haemophilus</taxon>
    </lineage>
</organism>
<dbReference type="EMBL" id="AE017143">
    <property type="protein sequence ID" value="AAP96108.1"/>
    <property type="molecule type" value="Genomic_DNA"/>
</dbReference>
<dbReference type="RefSeq" id="WP_010945157.1">
    <property type="nucleotide sequence ID" value="NC_002940.2"/>
</dbReference>
<dbReference type="SMR" id="Q7VLW2"/>
<dbReference type="STRING" id="233412.HD_1286"/>
<dbReference type="KEGG" id="hdu:HD_1286"/>
<dbReference type="eggNOG" id="COG0178">
    <property type="taxonomic scope" value="Bacteria"/>
</dbReference>
<dbReference type="HOGENOM" id="CLU_001370_0_2_6"/>
<dbReference type="OrthoDB" id="9809851at2"/>
<dbReference type="Proteomes" id="UP000001022">
    <property type="component" value="Chromosome"/>
</dbReference>
<dbReference type="GO" id="GO:0005737">
    <property type="term" value="C:cytoplasm"/>
    <property type="evidence" value="ECO:0007669"/>
    <property type="project" value="UniProtKB-SubCell"/>
</dbReference>
<dbReference type="GO" id="GO:0009380">
    <property type="term" value="C:excinuclease repair complex"/>
    <property type="evidence" value="ECO:0007669"/>
    <property type="project" value="InterPro"/>
</dbReference>
<dbReference type="GO" id="GO:0005524">
    <property type="term" value="F:ATP binding"/>
    <property type="evidence" value="ECO:0007669"/>
    <property type="project" value="UniProtKB-UniRule"/>
</dbReference>
<dbReference type="GO" id="GO:0016887">
    <property type="term" value="F:ATP hydrolysis activity"/>
    <property type="evidence" value="ECO:0007669"/>
    <property type="project" value="InterPro"/>
</dbReference>
<dbReference type="GO" id="GO:0003677">
    <property type="term" value="F:DNA binding"/>
    <property type="evidence" value="ECO:0007669"/>
    <property type="project" value="UniProtKB-UniRule"/>
</dbReference>
<dbReference type="GO" id="GO:0009381">
    <property type="term" value="F:excinuclease ABC activity"/>
    <property type="evidence" value="ECO:0007669"/>
    <property type="project" value="UniProtKB-UniRule"/>
</dbReference>
<dbReference type="GO" id="GO:0008270">
    <property type="term" value="F:zinc ion binding"/>
    <property type="evidence" value="ECO:0007669"/>
    <property type="project" value="UniProtKB-UniRule"/>
</dbReference>
<dbReference type="GO" id="GO:0006289">
    <property type="term" value="P:nucleotide-excision repair"/>
    <property type="evidence" value="ECO:0007669"/>
    <property type="project" value="UniProtKB-UniRule"/>
</dbReference>
<dbReference type="GO" id="GO:0009432">
    <property type="term" value="P:SOS response"/>
    <property type="evidence" value="ECO:0007669"/>
    <property type="project" value="UniProtKB-UniRule"/>
</dbReference>
<dbReference type="CDD" id="cd03270">
    <property type="entry name" value="ABC_UvrA_I"/>
    <property type="match status" value="1"/>
</dbReference>
<dbReference type="CDD" id="cd03271">
    <property type="entry name" value="ABC_UvrA_II"/>
    <property type="match status" value="1"/>
</dbReference>
<dbReference type="FunFam" id="1.10.8.280:FF:000001">
    <property type="entry name" value="UvrABC system protein A"/>
    <property type="match status" value="1"/>
</dbReference>
<dbReference type="FunFam" id="1.20.1580.10:FF:000002">
    <property type="entry name" value="UvrABC system protein A"/>
    <property type="match status" value="1"/>
</dbReference>
<dbReference type="FunFam" id="1.20.1580.10:FF:000003">
    <property type="entry name" value="UvrABC system protein A"/>
    <property type="match status" value="1"/>
</dbReference>
<dbReference type="FunFam" id="3.30.190.20:FF:000003">
    <property type="entry name" value="UvrABC system protein A"/>
    <property type="match status" value="1"/>
</dbReference>
<dbReference type="Gene3D" id="1.10.8.280">
    <property type="entry name" value="ABC transporter ATPase domain-like"/>
    <property type="match status" value="1"/>
</dbReference>
<dbReference type="Gene3D" id="1.20.1580.10">
    <property type="entry name" value="ABC transporter ATPase like domain"/>
    <property type="match status" value="2"/>
</dbReference>
<dbReference type="Gene3D" id="3.30.1490.20">
    <property type="entry name" value="ATP-grasp fold, A domain"/>
    <property type="match status" value="1"/>
</dbReference>
<dbReference type="Gene3D" id="3.40.50.300">
    <property type="entry name" value="P-loop containing nucleotide triphosphate hydrolases"/>
    <property type="match status" value="2"/>
</dbReference>
<dbReference type="HAMAP" id="MF_00205">
    <property type="entry name" value="UvrA"/>
    <property type="match status" value="1"/>
</dbReference>
<dbReference type="InterPro" id="IPR003439">
    <property type="entry name" value="ABC_transporter-like_ATP-bd"/>
</dbReference>
<dbReference type="InterPro" id="IPR017871">
    <property type="entry name" value="ABC_transporter-like_CS"/>
</dbReference>
<dbReference type="InterPro" id="IPR013815">
    <property type="entry name" value="ATP_grasp_subdomain_1"/>
</dbReference>
<dbReference type="InterPro" id="IPR027417">
    <property type="entry name" value="P-loop_NTPase"/>
</dbReference>
<dbReference type="InterPro" id="IPR004602">
    <property type="entry name" value="UvrA"/>
</dbReference>
<dbReference type="InterPro" id="IPR041552">
    <property type="entry name" value="UvrA_DNA-bd"/>
</dbReference>
<dbReference type="InterPro" id="IPR041102">
    <property type="entry name" value="UvrA_inter"/>
</dbReference>
<dbReference type="NCBIfam" id="NF001503">
    <property type="entry name" value="PRK00349.1"/>
    <property type="match status" value="1"/>
</dbReference>
<dbReference type="NCBIfam" id="TIGR00630">
    <property type="entry name" value="uvra"/>
    <property type="match status" value="1"/>
</dbReference>
<dbReference type="PANTHER" id="PTHR43152">
    <property type="entry name" value="UVRABC SYSTEM PROTEIN A"/>
    <property type="match status" value="1"/>
</dbReference>
<dbReference type="PANTHER" id="PTHR43152:SF3">
    <property type="entry name" value="UVRABC SYSTEM PROTEIN A"/>
    <property type="match status" value="1"/>
</dbReference>
<dbReference type="Pfam" id="PF17755">
    <property type="entry name" value="UvrA_DNA-bind"/>
    <property type="match status" value="1"/>
</dbReference>
<dbReference type="Pfam" id="PF17760">
    <property type="entry name" value="UvrA_inter"/>
    <property type="match status" value="1"/>
</dbReference>
<dbReference type="SUPFAM" id="SSF52540">
    <property type="entry name" value="P-loop containing nucleoside triphosphate hydrolases"/>
    <property type="match status" value="2"/>
</dbReference>
<dbReference type="PROSITE" id="PS00211">
    <property type="entry name" value="ABC_TRANSPORTER_1"/>
    <property type="match status" value="2"/>
</dbReference>
<dbReference type="PROSITE" id="PS50893">
    <property type="entry name" value="ABC_TRANSPORTER_2"/>
    <property type="match status" value="1"/>
</dbReference>
<proteinExistence type="inferred from homology"/>
<reference key="1">
    <citation type="submission" date="2003-06" db="EMBL/GenBank/DDBJ databases">
        <title>The complete genome sequence of Haemophilus ducreyi.</title>
        <authorList>
            <person name="Munson R.S. Jr."/>
            <person name="Ray W.C."/>
            <person name="Mahairas G."/>
            <person name="Sabo P."/>
            <person name="Mungur R."/>
            <person name="Johnson L."/>
            <person name="Nguyen D."/>
            <person name="Wang J."/>
            <person name="Forst C."/>
            <person name="Hood L."/>
        </authorList>
    </citation>
    <scope>NUCLEOTIDE SEQUENCE [LARGE SCALE GENOMIC DNA]</scope>
    <source>
        <strain>35000HP / ATCC 700724</strain>
    </source>
</reference>
<name>UVRA_HAEDU</name>
<gene>
    <name evidence="1" type="primary">uvrA</name>
    <name type="ordered locus">HD_1286</name>
</gene>
<evidence type="ECO:0000255" key="1">
    <source>
        <dbReference type="HAMAP-Rule" id="MF_00205"/>
    </source>
</evidence>